<dbReference type="EMBL" id="U40487">
    <property type="protein sequence ID" value="AAC43550.1"/>
    <property type="molecule type" value="Genomic_DNA"/>
</dbReference>
<dbReference type="EMBL" id="CP000480">
    <property type="protein sequence ID" value="ABK70581.1"/>
    <property type="molecule type" value="Genomic_DNA"/>
</dbReference>
<dbReference type="EMBL" id="CP001663">
    <property type="protein sequence ID" value="AFP42494.1"/>
    <property type="molecule type" value="Genomic_DNA"/>
</dbReference>
<dbReference type="RefSeq" id="WP_011731134.1">
    <property type="nucleotide sequence ID" value="NZ_SIJM01000027.1"/>
</dbReference>
<dbReference type="RefSeq" id="YP_890443.1">
    <property type="nucleotide sequence ID" value="NC_008596.1"/>
</dbReference>
<dbReference type="SMR" id="A0R5K5"/>
<dbReference type="STRING" id="246196.MSMEG_6225"/>
<dbReference type="ChEMBL" id="CHEMBL4295530"/>
<dbReference type="TCDB" id="2.A.1.3.3">
    <property type="family name" value="the major facilitator superfamily (mfs)"/>
</dbReference>
<dbReference type="PaxDb" id="246196-MSMEI_6063"/>
<dbReference type="GeneID" id="93460849"/>
<dbReference type="KEGG" id="msb:LJ00_30775"/>
<dbReference type="KEGG" id="msg:MSMEI_6063"/>
<dbReference type="KEGG" id="msm:MSMEG_6225"/>
<dbReference type="PATRIC" id="fig|246196.19.peg.6062"/>
<dbReference type="eggNOG" id="COG0477">
    <property type="taxonomic scope" value="Bacteria"/>
</dbReference>
<dbReference type="OrthoDB" id="9781469at2"/>
<dbReference type="Proteomes" id="UP000000757">
    <property type="component" value="Chromosome"/>
</dbReference>
<dbReference type="Proteomes" id="UP000006158">
    <property type="component" value="Chromosome"/>
</dbReference>
<dbReference type="GO" id="GO:0005886">
    <property type="term" value="C:plasma membrane"/>
    <property type="evidence" value="ECO:0007669"/>
    <property type="project" value="UniProtKB-SubCell"/>
</dbReference>
<dbReference type="GO" id="GO:0022857">
    <property type="term" value="F:transmembrane transporter activity"/>
    <property type="evidence" value="ECO:0007669"/>
    <property type="project" value="InterPro"/>
</dbReference>
<dbReference type="GO" id="GO:0046677">
    <property type="term" value="P:response to antibiotic"/>
    <property type="evidence" value="ECO:0007669"/>
    <property type="project" value="UniProtKB-KW"/>
</dbReference>
<dbReference type="CDD" id="cd17321">
    <property type="entry name" value="MFS_MMR_MDR_like"/>
    <property type="match status" value="1"/>
</dbReference>
<dbReference type="Gene3D" id="1.20.1250.20">
    <property type="entry name" value="MFS general substrate transporter like domains"/>
    <property type="match status" value="1"/>
</dbReference>
<dbReference type="Gene3D" id="1.20.1720.10">
    <property type="entry name" value="Multidrug resistance protein D"/>
    <property type="match status" value="1"/>
</dbReference>
<dbReference type="InterPro" id="IPR011701">
    <property type="entry name" value="MFS"/>
</dbReference>
<dbReference type="InterPro" id="IPR020846">
    <property type="entry name" value="MFS_dom"/>
</dbReference>
<dbReference type="InterPro" id="IPR036259">
    <property type="entry name" value="MFS_trans_sf"/>
</dbReference>
<dbReference type="NCBIfam" id="NF033896">
    <property type="entry name" value="MFS_LfrA"/>
    <property type="match status" value="1"/>
</dbReference>
<dbReference type="PANTHER" id="PTHR42718">
    <property type="entry name" value="MAJOR FACILITATOR SUPERFAMILY MULTIDRUG TRANSPORTER MFSC"/>
    <property type="match status" value="1"/>
</dbReference>
<dbReference type="PANTHER" id="PTHR42718:SF47">
    <property type="entry name" value="METHYL VIOLOGEN RESISTANCE PROTEIN SMVA"/>
    <property type="match status" value="1"/>
</dbReference>
<dbReference type="Pfam" id="PF07690">
    <property type="entry name" value="MFS_1"/>
    <property type="match status" value="1"/>
</dbReference>
<dbReference type="SUPFAM" id="SSF103473">
    <property type="entry name" value="MFS general substrate transporter"/>
    <property type="match status" value="1"/>
</dbReference>
<dbReference type="PROSITE" id="PS50850">
    <property type="entry name" value="MFS"/>
    <property type="match status" value="1"/>
</dbReference>
<gene>
    <name evidence="9" type="primary">lfrA</name>
    <name evidence="12" type="ordered locus">MSMEG_6225</name>
    <name evidence="13" type="ordered locus">MSMEI_6063</name>
</gene>
<evidence type="ECO:0000255" key="1"/>
<evidence type="ECO:0000269" key="2">
    <source>
    </source>
</evidence>
<evidence type="ECO:0000269" key="3">
    <source>
    </source>
</evidence>
<evidence type="ECO:0000269" key="4">
    <source>
    </source>
</evidence>
<evidence type="ECO:0000269" key="5">
    <source>
    </source>
</evidence>
<evidence type="ECO:0000269" key="6">
    <source>
    </source>
</evidence>
<evidence type="ECO:0000269" key="7">
    <source>
    </source>
</evidence>
<evidence type="ECO:0000269" key="8">
    <source>
    </source>
</evidence>
<evidence type="ECO:0000303" key="9">
    <source>
    </source>
</evidence>
<evidence type="ECO:0000305" key="10"/>
<evidence type="ECO:0000305" key="11">
    <source>
    </source>
</evidence>
<evidence type="ECO:0000312" key="12">
    <source>
        <dbReference type="EMBL" id="ABK70581.1"/>
    </source>
</evidence>
<evidence type="ECO:0000312" key="13">
    <source>
        <dbReference type="EMBL" id="AFP42494.1"/>
    </source>
</evidence>
<feature type="chain" id="PRO_0000447320" description="Multidrug efflux pump LfrA">
    <location>
        <begin position="1"/>
        <end position="504"/>
    </location>
</feature>
<feature type="transmembrane region" description="Helical" evidence="1">
    <location>
        <begin position="19"/>
        <end position="39"/>
    </location>
</feature>
<feature type="transmembrane region" description="Helical" evidence="1">
    <location>
        <begin position="58"/>
        <end position="78"/>
    </location>
</feature>
<feature type="transmembrane region" description="Helical" evidence="1">
    <location>
        <begin position="87"/>
        <end position="107"/>
    </location>
</feature>
<feature type="transmembrane region" description="Helical" evidence="1">
    <location>
        <begin position="110"/>
        <end position="130"/>
    </location>
</feature>
<feature type="transmembrane region" description="Helical" evidence="1">
    <location>
        <begin position="145"/>
        <end position="165"/>
    </location>
</feature>
<feature type="transmembrane region" description="Helical" evidence="1">
    <location>
        <begin position="172"/>
        <end position="192"/>
    </location>
</feature>
<feature type="transmembrane region" description="Helical" evidence="1">
    <location>
        <begin position="206"/>
        <end position="226"/>
    </location>
</feature>
<feature type="transmembrane region" description="Helical" evidence="1">
    <location>
        <begin position="233"/>
        <end position="253"/>
    </location>
</feature>
<feature type="transmembrane region" description="Helical" evidence="1">
    <location>
        <begin position="275"/>
        <end position="295"/>
    </location>
</feature>
<feature type="transmembrane region" description="Helical" evidence="1">
    <location>
        <begin position="309"/>
        <end position="329"/>
    </location>
</feature>
<feature type="transmembrane region" description="Helical" evidence="1">
    <location>
        <begin position="338"/>
        <end position="358"/>
    </location>
</feature>
<feature type="transmembrane region" description="Helical" evidence="1">
    <location>
        <begin position="361"/>
        <end position="381"/>
    </location>
</feature>
<feature type="transmembrane region" description="Helical" evidence="1">
    <location>
        <begin position="408"/>
        <end position="428"/>
    </location>
</feature>
<feature type="transmembrane region" description="Helical" evidence="1">
    <location>
        <begin position="480"/>
        <end position="500"/>
    </location>
</feature>
<feature type="sequence conflict" description="In Ref. 1; AAC43550." evidence="10" ref="1">
    <original>L</original>
    <variation>V</variation>
    <location>
        <position position="87"/>
    </location>
</feature>
<feature type="sequence conflict" description="In Ref. 1; AAC43550." evidence="10" ref="1">
    <original>A</original>
    <variation>T</variation>
    <location>
        <position position="108"/>
    </location>
</feature>
<name>LFRA_MYCS2</name>
<accession>A0R5K5</accession>
<accession>I7GG83</accession>
<accession>Q50392</accession>
<proteinExistence type="evidence at transcript level"/>
<sequence length="504" mass="51524">MSTCIEGTPSTTRTPTRAWVALAVLALPVLLIAIDNTVLAFALPLIAEDFRPSATTQLWIVDVYSLVLAALLVAMGSLGDRLGRRRLLLIGGAGFAVVSALAAFAPSAELLVGARALLGVFGAMLMPSTLSLIRNIFTDASARRLAIAIWASCFTAGSALGPIVGGALLEHFHWGAVFLVAVPILLPLLVLGPRLVPESRDPNPGPFDPVSIVLSFTTMLPIVWAVKTAAHDGLSAAAAAAFAVGIVSGALFVRRQNRSATPMLDIGLFKVMPFTSSILANFLSIIGLIGFIFFISQHLQLVLGLSPLTAGLVTLPGAVVSMIAGLAVVKAAKRFAPDTLMVTGLVFVAVGFLMILLFRHNLTVAAIIASFVVLELGVGVSQTVSNDTIVASVPAAKSGAASAVSETAYELGAVVGTATLGTIFTAFYRSNVDVPAGLTPEQTGAAAESIGGAAAVAADLPAATATQLLDSARAAFDSGIAPTAVIAAMLVLAAAAVVGVAFRR</sequence>
<reference key="1">
    <citation type="journal article" date="1996" name="Proc. Natl. Acad. Sci. U.S.A.">
        <title>Efflux pump of the proton antiporter family confers low-level fluoroquinolone resistance in Mycobacterium smegmatis.</title>
        <authorList>
            <person name="Takiff H.E."/>
            <person name="Cimino M."/>
            <person name="Musso M.C."/>
            <person name="Weisbrod T."/>
            <person name="Martinez R."/>
            <person name="Delgado M.B."/>
            <person name="Salazar L."/>
            <person name="Bloom B.R."/>
            <person name="Jacobs W.R. Jr."/>
        </authorList>
    </citation>
    <scope>NUCLEOTIDE SEQUENCE [GENOMIC DNA]</scope>
    <scope>FUNCTION</scope>
    <scope>OVEREXPRESSION</scope>
    <source>
        <strain>ATCC 700084 / mc(2)155</strain>
    </source>
</reference>
<reference key="2">
    <citation type="submission" date="2006-10" db="EMBL/GenBank/DDBJ databases">
        <authorList>
            <person name="Fleischmann R.D."/>
            <person name="Dodson R.J."/>
            <person name="Haft D.H."/>
            <person name="Merkel J.S."/>
            <person name="Nelson W.C."/>
            <person name="Fraser C.M."/>
        </authorList>
    </citation>
    <scope>NUCLEOTIDE SEQUENCE [LARGE SCALE GENOMIC DNA]</scope>
    <source>
        <strain>ATCC 700084 / mc(2)155</strain>
    </source>
</reference>
<reference key="3">
    <citation type="journal article" date="2007" name="Genome Biol.">
        <title>Interrupted coding sequences in Mycobacterium smegmatis: authentic mutations or sequencing errors?</title>
        <authorList>
            <person name="Deshayes C."/>
            <person name="Perrodou E."/>
            <person name="Gallien S."/>
            <person name="Euphrasie D."/>
            <person name="Schaeffer C."/>
            <person name="Van-Dorsselaer A."/>
            <person name="Poch O."/>
            <person name="Lecompte O."/>
            <person name="Reyrat J.-M."/>
        </authorList>
    </citation>
    <scope>NUCLEOTIDE SEQUENCE [LARGE SCALE GENOMIC DNA]</scope>
    <source>
        <strain>ATCC 700084 / mc(2)155</strain>
    </source>
</reference>
<reference key="4">
    <citation type="journal article" date="2009" name="Genome Res.">
        <title>Ortho-proteogenomics: multiple proteomes investigation through orthology and a new MS-based protocol.</title>
        <authorList>
            <person name="Gallien S."/>
            <person name="Perrodou E."/>
            <person name="Carapito C."/>
            <person name="Deshayes C."/>
            <person name="Reyrat J.-M."/>
            <person name="Van Dorsselaer A."/>
            <person name="Poch O."/>
            <person name="Schaeffer C."/>
            <person name="Lecompte O."/>
        </authorList>
    </citation>
    <scope>NUCLEOTIDE SEQUENCE [LARGE SCALE GENOMIC DNA]</scope>
    <source>
        <strain>ATCC 700084 / mc(2)155</strain>
    </source>
</reference>
<reference key="5">
    <citation type="journal article" date="1996" name="J. Bacteriol.">
        <title>Active efflux of fluoroquinolones in Mycobacterium smegmatis mediated by LfrA, a multidrug efflux pump.</title>
        <authorList>
            <person name="Liu J."/>
            <person name="Takiff H.E."/>
            <person name="Nikaido H."/>
        </authorList>
    </citation>
    <scope>FUNCTION</scope>
    <scope>ACTIVITY REGULATION</scope>
    <scope>SUBCELLULAR LOCATION</scope>
    <source>
        <strain>ATCC 700084 / mc(2)155</strain>
    </source>
</reference>
<reference key="6">
    <citation type="journal article" date="2000" name="FEMS Microbiol. Lett.">
        <title>Contribution of the multidrug efflux pump LfrA to innate mycobacterial drug resistance.</title>
        <authorList>
            <person name="Sander P."/>
            <person name="De Rossi E."/>
            <person name="Boeddinghaus B."/>
            <person name="Cantoni R."/>
            <person name="Branzoni M."/>
            <person name="Boettger E.C."/>
            <person name="Takiff H."/>
            <person name="Rodriquez R."/>
            <person name="Lopez G."/>
            <person name="Riccardi G."/>
        </authorList>
    </citation>
    <scope>FUNCTION</scope>
    <scope>DISRUPTION PHENOTYPE</scope>
    <source>
        <strain>ATCC 700084 / mc(2)155</strain>
    </source>
</reference>
<reference key="7">
    <citation type="journal article" date="2004" name="Antimicrob. Agents Chemother.">
        <title>Efflux pump-mediated intrinsic drug resistance in Mycobacterium smegmatis.</title>
        <authorList>
            <person name="Li X.Z."/>
            <person name="Zhang L."/>
            <person name="Nikaido H."/>
        </authorList>
    </citation>
    <scope>FUNCTION</scope>
    <scope>INDUCTION</scope>
    <scope>DISRUPTION PHENOTYPE</scope>
    <source>
        <strain>ATCC 700084 / mc(2)155</strain>
    </source>
</reference>
<reference key="8">
    <citation type="journal article" date="2006" name="Antimicrob. Agents Chemother.">
        <title>LfrR is a repressor that regulates expression of the efflux pump LfrA in Mycobacterium smegmatis.</title>
        <authorList>
            <person name="Buroni S."/>
            <person name="Manina G."/>
            <person name="Guglierame P."/>
            <person name="Pasca M.R."/>
            <person name="Riccardi G."/>
            <person name="De Rossi E."/>
        </authorList>
    </citation>
    <scope>INDUCTION</scope>
    <source>
        <strain>ATCC 700084 / mc(2)155</strain>
    </source>
</reference>
<reference key="9">
    <citation type="journal article" date="2011" name="BMC Microbiol.">
        <title>Ethidium bromide transport across Mycobacterium smegmatis cell-wall: correlation with antibiotic resistance.</title>
        <authorList>
            <person name="Rodrigues L."/>
            <person name="Ramos J."/>
            <person name="Couto I."/>
            <person name="Amaral L."/>
            <person name="Viveiros M."/>
        </authorList>
    </citation>
    <scope>FUNCTION</scope>
    <scope>ACTIVITY REGULATION</scope>
    <scope>DISRUPTION PHENOTYPE</scope>
    <source>
        <strain>ATCC 700084 / mc(2)155</strain>
    </source>
</reference>
<reference key="10">
    <citation type="journal article" date="2019" name="Mol. Microbiol.">
        <title>Increased drug permeability of a stiffened mycobacterial outer membrane in cells lacking MFS transporter Rv1410 and lipoprotein LprG.</title>
        <authorList>
            <person name="Hohl M."/>
            <person name="Remm S."/>
            <person name="Eskandarian H.A."/>
            <person name="Dal Molin M."/>
            <person name="Arnold F.M."/>
            <person name="Huerlimann L.M."/>
            <person name="Kruegel A."/>
            <person name="Fantner G.E."/>
            <person name="Sander P."/>
            <person name="Seeger M.A."/>
        </authorList>
    </citation>
    <scope>FUNCTION</scope>
    <scope>DISRUPTION PHENOTYPE</scope>
    <source>
        <strain>ATCC 700084 / mc(2)155</strain>
    </source>
</reference>
<protein>
    <recommendedName>
        <fullName evidence="10">Multidrug efflux pump LfrA</fullName>
    </recommendedName>
    <alternativeName>
        <fullName evidence="9">Low-level fluoroquinolone resistance protein</fullName>
    </alternativeName>
</protein>
<comment type="function">
    <text evidence="2 3 5 6 7 8">Energy-dependent efflux pump that contributes to drug resistance (PubMed:11094273, PubMed:15215089, PubMed:21332993, PubMed:30742339, PubMed:8682782). Catalyzes the efflux of norfloxacin and several related fluoroquinolones (FQ) (PubMed:8682782). Contributes significantly to the intrinsic MICs for ethidium bromide and acriflavine (PubMed:11094273, PubMed:21332993). Overexpression confers low-level resistance to hydrophilic FQ such as ciprofloxacin, ofloxacin and levofloxacin, and to ethidium bromide, acridine, acriflavine, rhodamine 123 and some quaternary ammonium compounds (PubMed:11094273, PubMed:8552639). May contribute to resistance to certain beta-lactams (PubMed:15215089). Probably uses the proton motive force to export drugs (PubMed:30742339, PubMed:8682782).</text>
</comment>
<comment type="activity regulation">
    <text evidence="5 8">Inhibited by the protonophore carbonyl cyanide m-chorophenylhydrazone (CCCP) (PubMed:8682782). Ethidium bromide efflux is inhibited by chlorpromazine, thioridazine and verapamil (PubMed:21332993).</text>
</comment>
<comment type="subcellular location">
    <subcellularLocation>
        <location evidence="11">Cell inner membrane</location>
        <topology evidence="1">Multi-pass membrane protein</topology>
    </subcellularLocation>
</comment>
<comment type="induction">
    <text evidence="3 4">Expression is repressed by LfrR (PubMed:15215089, PubMed:17043130). Induced by ethidium bromide, acriflavine or rhodamine 123, via inhibition of LfrR binding (PubMed:17043130).</text>
</comment>
<comment type="disruption phenotype">
    <text evidence="2 3 5 6">Disruption or deletion of the gene decreases resistance to ethidium bromide and acriflavine and results in a small decrease in minimal inhibitory concentrations (MICs) for ciprofloxacin, doxorubicin, rhodamine, norfloxacin, isoniazid, tetracycline, ethambutol and rifampicin (PubMed:11094273, PubMed:15215089, PubMed:21332993). Increased accumulation of intracellular ethidium bromide in the presence and absence of a proton motive force (PubMed:30742339).</text>
</comment>
<comment type="similarity">
    <text evidence="10">Belongs to the major facilitator superfamily.</text>
</comment>
<organism>
    <name type="scientific">Mycolicibacterium smegmatis (strain ATCC 700084 / mc(2)155)</name>
    <name type="common">Mycobacterium smegmatis</name>
    <dbReference type="NCBI Taxonomy" id="246196"/>
    <lineage>
        <taxon>Bacteria</taxon>
        <taxon>Bacillati</taxon>
        <taxon>Actinomycetota</taxon>
        <taxon>Actinomycetes</taxon>
        <taxon>Mycobacteriales</taxon>
        <taxon>Mycobacteriaceae</taxon>
        <taxon>Mycolicibacterium</taxon>
    </lineage>
</organism>
<keyword id="KW-0046">Antibiotic resistance</keyword>
<keyword id="KW-0997">Cell inner membrane</keyword>
<keyword id="KW-1003">Cell membrane</keyword>
<keyword id="KW-0472">Membrane</keyword>
<keyword id="KW-1185">Reference proteome</keyword>
<keyword id="KW-0812">Transmembrane</keyword>
<keyword id="KW-1133">Transmembrane helix</keyword>
<keyword id="KW-0813">Transport</keyword>